<keyword id="KW-0963">Cytoplasm</keyword>
<keyword id="KW-1015">Disulfide bond</keyword>
<keyword id="KW-0945">Host-virus interaction</keyword>
<keyword id="KW-0396">Initiation factor</keyword>
<keyword id="KW-0539">Nucleus</keyword>
<keyword id="KW-0611">Plant defense</keyword>
<keyword id="KW-0648">Protein biosynthesis</keyword>
<keyword id="KW-1185">Reference proteome</keyword>
<keyword id="KW-0694">RNA-binding</keyword>
<keyword id="KW-0810">Translation regulation</keyword>
<protein>
    <recommendedName>
        <fullName evidence="10">Eukaryotic translation initiation factor 4E-2</fullName>
        <shortName evidence="8">NteIF4E2</shortName>
        <shortName evidence="10">eIF4E-2</shortName>
    </recommendedName>
    <alternativeName>
        <fullName evidence="11">Eukaryotic translation initiation factor 4E2-S</fullName>
        <shortName evidence="11">eIF4E2-S</shortName>
    </alternativeName>
    <alternativeName>
        <fullName evidence="12">eIF-4F 25 kDa subunit</fullName>
    </alternativeName>
    <alternativeName>
        <fullName evidence="12">eIF-4F p26 subunit</fullName>
    </alternativeName>
    <alternativeName>
        <fullName evidence="12">mRNA cap-binding protein</fullName>
    </alternativeName>
</protein>
<name>IF4E2_TOBAC</name>
<dbReference type="EMBL" id="AY702653">
    <property type="protein sequence ID" value="AAU08243.1"/>
    <property type="molecule type" value="mRNA"/>
</dbReference>
<dbReference type="EMBL" id="HM159443">
    <property type="protein sequence ID" value="ADK22106.1"/>
    <property type="molecule type" value="mRNA"/>
</dbReference>
<dbReference type="EMBL" id="HM159444">
    <property type="protein sequence ID" value="ADK22107.1"/>
    <property type="molecule type" value="mRNA"/>
</dbReference>
<dbReference type="EMBL" id="KC625569">
    <property type="protein sequence ID" value="AHA36676.1"/>
    <property type="molecule type" value="mRNA"/>
</dbReference>
<dbReference type="EMBL" id="KC625570">
    <property type="protein sequence ID" value="AHA36677.1"/>
    <property type="molecule type" value="mRNA"/>
</dbReference>
<dbReference type="EMBL" id="KC625571">
    <property type="protein sequence ID" value="AHA36678.1"/>
    <property type="molecule type" value="mRNA"/>
</dbReference>
<dbReference type="EMBL" id="KC625572">
    <property type="protein sequence ID" value="AHA36679.1"/>
    <property type="molecule type" value="mRNA"/>
</dbReference>
<dbReference type="EMBL" id="KC625573">
    <property type="protein sequence ID" value="AHA36680.1"/>
    <property type="molecule type" value="mRNA"/>
</dbReference>
<dbReference type="EMBL" id="KC625574">
    <property type="protein sequence ID" value="AHA36681.1"/>
    <property type="molecule type" value="mRNA"/>
</dbReference>
<dbReference type="EMBL" id="KC625575">
    <property type="protein sequence ID" value="AHA36682.1"/>
    <property type="molecule type" value="mRNA"/>
</dbReference>
<dbReference type="EMBL" id="KC625576">
    <property type="protein sequence ID" value="AHA36683.1"/>
    <property type="molecule type" value="mRNA"/>
</dbReference>
<dbReference type="EMBL" id="KC625577">
    <property type="protein sequence ID" value="AHA36684.1"/>
    <property type="molecule type" value="mRNA"/>
</dbReference>
<dbReference type="EMBL" id="KJ143694">
    <property type="protein sequence ID" value="AHN92548.1"/>
    <property type="molecule type" value="mRNA"/>
</dbReference>
<dbReference type="EMBL" id="KJ184848">
    <property type="protein sequence ID" value="AHN92549.1"/>
    <property type="molecule type" value="mRNA"/>
</dbReference>
<dbReference type="EMBL" id="KM202071">
    <property type="protein sequence ID" value="AIG20724.1"/>
    <property type="molecule type" value="mRNA"/>
</dbReference>
<dbReference type="EMBL" id="MN897002">
    <property type="protein sequence ID" value="QNT12789.1"/>
    <property type="molecule type" value="mRNA"/>
</dbReference>
<dbReference type="RefSeq" id="NP_001312002.1">
    <property type="nucleotide sequence ID" value="NM_001325073.1"/>
</dbReference>
<dbReference type="SMR" id="Q66UV4"/>
<dbReference type="STRING" id="4097.Q66UV4"/>
<dbReference type="PaxDb" id="4097-Q66UV4"/>
<dbReference type="GeneID" id="107770689"/>
<dbReference type="KEGG" id="nta:107770689"/>
<dbReference type="OMA" id="VKPRICL"/>
<dbReference type="OrthoDB" id="590761at2759"/>
<dbReference type="PhylomeDB" id="Q66UV4"/>
<dbReference type="Proteomes" id="UP000084051">
    <property type="component" value="Unplaced"/>
</dbReference>
<dbReference type="GO" id="GO:0005737">
    <property type="term" value="C:cytoplasm"/>
    <property type="evidence" value="ECO:0000250"/>
    <property type="project" value="UniProtKB"/>
</dbReference>
<dbReference type="GO" id="GO:0016281">
    <property type="term" value="C:eukaryotic translation initiation factor 4F complex"/>
    <property type="evidence" value="ECO:0000318"/>
    <property type="project" value="GO_Central"/>
</dbReference>
<dbReference type="GO" id="GO:0005634">
    <property type="term" value="C:nucleus"/>
    <property type="evidence" value="ECO:0000250"/>
    <property type="project" value="UniProtKB"/>
</dbReference>
<dbReference type="GO" id="GO:0000340">
    <property type="term" value="F:RNA 7-methylguanosine cap binding"/>
    <property type="evidence" value="ECO:0000318"/>
    <property type="project" value="GO_Central"/>
</dbReference>
<dbReference type="GO" id="GO:0003723">
    <property type="term" value="F:RNA binding"/>
    <property type="evidence" value="ECO:0000250"/>
    <property type="project" value="UniProtKB"/>
</dbReference>
<dbReference type="GO" id="GO:0003743">
    <property type="term" value="F:translation initiation factor activity"/>
    <property type="evidence" value="ECO:0000250"/>
    <property type="project" value="UniProtKB"/>
</dbReference>
<dbReference type="GO" id="GO:0051607">
    <property type="term" value="P:defense response to virus"/>
    <property type="evidence" value="ECO:0000250"/>
    <property type="project" value="UniProtKB"/>
</dbReference>
<dbReference type="GO" id="GO:0006417">
    <property type="term" value="P:regulation of translation"/>
    <property type="evidence" value="ECO:0007669"/>
    <property type="project" value="UniProtKB-KW"/>
</dbReference>
<dbReference type="GO" id="GO:0006413">
    <property type="term" value="P:translational initiation"/>
    <property type="evidence" value="ECO:0000250"/>
    <property type="project" value="UniProtKB"/>
</dbReference>
<dbReference type="FunFam" id="3.30.760.10:FF:000003">
    <property type="entry name" value="Eukaryotic translation initiation factor 4E"/>
    <property type="match status" value="1"/>
</dbReference>
<dbReference type="Gene3D" id="3.30.760.10">
    <property type="entry name" value="RNA Cap, Translation Initiation Factor Eif4e"/>
    <property type="match status" value="1"/>
</dbReference>
<dbReference type="InterPro" id="IPR023398">
    <property type="entry name" value="TIF_eIF4e-like"/>
</dbReference>
<dbReference type="InterPro" id="IPR001040">
    <property type="entry name" value="TIF_eIF_4E"/>
</dbReference>
<dbReference type="InterPro" id="IPR019770">
    <property type="entry name" value="TIF_eIF_4E_CS"/>
</dbReference>
<dbReference type="PANTHER" id="PTHR11960">
    <property type="entry name" value="EUKARYOTIC TRANSLATION INITIATION FACTOR 4E RELATED"/>
    <property type="match status" value="1"/>
</dbReference>
<dbReference type="PANTHER" id="PTHR11960:SF8">
    <property type="entry name" value="EUKARYOTIC TRANSLATION INITIATION FACTOR 4E1-RELATED"/>
    <property type="match status" value="1"/>
</dbReference>
<dbReference type="Pfam" id="PF01652">
    <property type="entry name" value="IF4E"/>
    <property type="match status" value="1"/>
</dbReference>
<dbReference type="SUPFAM" id="SSF55418">
    <property type="entry name" value="eIF4e-like"/>
    <property type="match status" value="1"/>
</dbReference>
<dbReference type="PROSITE" id="PS00813">
    <property type="entry name" value="IF4E"/>
    <property type="match status" value="1"/>
</dbReference>
<organism>
    <name type="scientific">Nicotiana tabacum</name>
    <name type="common">Common tobacco</name>
    <dbReference type="NCBI Taxonomy" id="4097"/>
    <lineage>
        <taxon>Eukaryota</taxon>
        <taxon>Viridiplantae</taxon>
        <taxon>Streptophyta</taxon>
        <taxon>Embryophyta</taxon>
        <taxon>Tracheophyta</taxon>
        <taxon>Spermatophyta</taxon>
        <taxon>Magnoliopsida</taxon>
        <taxon>eudicotyledons</taxon>
        <taxon>Gunneridae</taxon>
        <taxon>Pentapetalae</taxon>
        <taxon>asterids</taxon>
        <taxon>lamiids</taxon>
        <taxon>Solanales</taxon>
        <taxon>Solanaceae</taxon>
        <taxon>Nicotianoideae</taxon>
        <taxon>Nicotianeae</taxon>
        <taxon>Nicotiana</taxon>
    </lineage>
</organism>
<evidence type="ECO:0000250" key="1">
    <source>
        <dbReference type="UniProtKB" id="K0P2S0"/>
    </source>
</evidence>
<evidence type="ECO:0000250" key="2">
    <source>
        <dbReference type="UniProtKB" id="P29557"/>
    </source>
</evidence>
<evidence type="ECO:0000250" key="3">
    <source>
        <dbReference type="UniProtKB" id="Q00LS8"/>
    </source>
</evidence>
<evidence type="ECO:0000256" key="4">
    <source>
        <dbReference type="SAM" id="MobiDB-lite"/>
    </source>
</evidence>
<evidence type="ECO:0000269" key="5">
    <source ref="2"/>
</evidence>
<evidence type="ECO:0000269" key="6">
    <source ref="3"/>
</evidence>
<evidence type="ECO:0000269" key="7">
    <source ref="5"/>
</evidence>
<evidence type="ECO:0000303" key="8">
    <source>
    </source>
</evidence>
<evidence type="ECO:0000303" key="9">
    <source ref="3"/>
</evidence>
<evidence type="ECO:0000303" key="10">
    <source ref="5"/>
</evidence>
<evidence type="ECO:0000303" key="11">
    <source ref="6"/>
</evidence>
<evidence type="ECO:0000305" key="12"/>
<evidence type="ECO:0000305" key="13">
    <source ref="3"/>
</evidence>
<evidence type="ECO:0000305" key="14">
    <source ref="5"/>
</evidence>
<reference key="1">
    <citation type="journal article" date="2005" name="Plant Mol. Biol.">
        <title>Translation initiation factors eIF4E and eIFiso4E are required for polysome formation and regulate plant growth in tobacco.</title>
        <authorList>
            <person name="Combe J.P."/>
            <person name="Petracek M.E."/>
            <person name="van Eldik G."/>
            <person name="Meulewaeter F."/>
            <person name="Twell D."/>
        </authorList>
    </citation>
    <scope>NUCLEOTIDE SEQUENCE [MRNA]</scope>
    <source>
        <strain>cv. Samsun</strain>
    </source>
</reference>
<reference key="2">
    <citation type="submission" date="2010-04" db="EMBL/GenBank/DDBJ databases">
        <authorList>
            <person name="Guo Z.K."/>
            <person name="Liu L."/>
            <person name="Wan X.Q."/>
            <person name="Yan P.Q."/>
            <person name="Chao C."/>
            <person name="Chen R.P."/>
            <person name="Liu D."/>
            <person name="Qiu E.J."/>
            <person name="Wang C.J."/>
            <person name="Li L.J."/>
        </authorList>
    </citation>
    <scope>NUCLEOTIDE SEQUENCE [MRNA]</scope>
    <source>
        <strain>cv. cv91</strain>
        <strain>cv. LJ925</strain>
        <tissue>Leaf</tissue>
    </source>
</reference>
<reference key="3">
    <citation type="journal article" date="2013" name="Horticult. Environ. Biotechnol.">
        <title>Exploring natural variations in eIF4E and screening for potyviral resistance in diverse Nicotiana species.</title>
        <authorList>
            <person name="Yeam I."/>
            <person name="Jung J."/>
        </authorList>
    </citation>
    <scope>NUCLEOTIDE SEQUENCE [MRNA]</scope>
    <scope>FUNCTION</scope>
    <scope>FUNCTION (MICROBIAL INFECTION)</scope>
    <scope>VARIANT GLY-214</scope>
    <scope>SUBUNIT (MICROBIAL INFECTION)</scope>
    <source>
        <strain>cv. Bright Yellow 2</strain>
        <strain>cv. KF118</strain>
        <strain>cv. KF120</strain>
        <strain>cv. KY14</strain>
        <strain>cv. Samsun NN</strain>
        <strain>cv. Virginia Bright</strain>
        <strain>cv. Xanthi</strain>
    </source>
</reference>
<reference key="4">
    <citation type="submission" date="2014-01" db="EMBL/GenBank/DDBJ databases">
        <authorList>
            <person name="Zhu D."/>
            <person name="Wu Y."/>
        </authorList>
    </citation>
    <scope>NUCLEOTIDE SEQUENCE [MRNA]</scope>
    <source>
        <strain>cv. SN01</strain>
        <strain>cv. SN02</strain>
    </source>
</reference>
<reference key="5">
    <citation type="journal article" date="2015" name="Plant Mol. Biol. Rep.">
        <title>A eukaryotic translation Initiation Factor 4E (eIF4E) is responsible for the 'va' Tobacco recessive resistance to Potyviruses.</title>
        <authorList>
            <person name="Julio E."/>
            <person name="Cotucheau J."/>
            <person name="Decorps C."/>
            <person name="Volpatti R."/>
            <person name="Sentenac C."/>
            <person name="Candresse T."/>
            <person name="Dorlhac de Borne F."/>
        </authorList>
    </citation>
    <scope>NUCLEOTIDE SEQUENCE [MRNA]</scope>
    <scope>FUNCTION</scope>
    <scope>FUNCTION (MICROBIAL INFECTION)</scope>
    <scope>TISSUE SPECIFICITY</scope>
    <scope>SUBUNIT (MICROBIAL INFECTION)</scope>
    <source>
        <tissue>Leaf</tissue>
        <tissue>Root</tissue>
        <tissue>Stem</tissue>
    </source>
</reference>
<reference key="6">
    <citation type="submission" date="2020-01" db="EMBL/GenBank/DDBJ databases">
        <title>Simultaneous mutation of multiple eukaryotic translation-initiation factor genes by CRISPR/Cas9 confers durable and broad resistance to potyviruses in tobacco.</title>
        <authorList>
            <person name="Liu Y."/>
            <person name="Huang C."/>
            <person name="Li Z."/>
        </authorList>
    </citation>
    <scope>NUCLEOTIDE SEQUENCE [MRNA]</scope>
</reference>
<reference key="7">
    <citation type="journal article" date="2014" name="Nat. Commun.">
        <title>The tobacco genome sequence and its comparison with those of tomato and potato.</title>
        <authorList>
            <person name="Sierro N."/>
            <person name="Battey J.N."/>
            <person name="Ouadi S."/>
            <person name="Bakaher N."/>
            <person name="Bovet L."/>
            <person name="Willig A."/>
            <person name="Goepfert S."/>
            <person name="Peitsch M.C."/>
            <person name="Ivanov N.V."/>
        </authorList>
    </citation>
    <scope>NUCLEOTIDE SEQUENCE [LARGE SCALE GENOMIC DNA]</scope>
    <source>
        <strain>cv. TN90</strain>
    </source>
</reference>
<gene>
    <name evidence="10" type="primary">eIF4E</name>
    <name evidence="11" type="synonym">eIF4E2-S</name>
    <name evidence="10" type="synonym">S05588</name>
    <name evidence="9" type="synonym">VA</name>
    <name type="ORF">LOC107770689</name>
</gene>
<feature type="chain" id="PRO_0000454056" description="Eukaryotic translation initiation factor 4E-2">
    <location>
        <begin position="1"/>
        <end position="222"/>
    </location>
</feature>
<feature type="region of interest" description="Disordered" evidence="4">
    <location>
        <begin position="1"/>
        <end position="35"/>
    </location>
</feature>
<feature type="region of interest" description="EIF4G-binding" evidence="3">
    <location>
        <begin position="47"/>
        <end position="50"/>
    </location>
</feature>
<feature type="region of interest" description="EIF4G-binding" evidence="3">
    <location>
        <begin position="57"/>
        <end position="93"/>
    </location>
</feature>
<feature type="region of interest" description="EIF4G-binding" evidence="3">
    <location>
        <begin position="141"/>
        <end position="150"/>
    </location>
</feature>
<feature type="compositionally biased region" description="Basic and acidic residues" evidence="4">
    <location>
        <begin position="1"/>
        <end position="20"/>
    </location>
</feature>
<feature type="compositionally biased region" description="Acidic residues" evidence="4">
    <location>
        <begin position="21"/>
        <end position="33"/>
    </location>
</feature>
<feature type="binding site" evidence="2">
    <location>
        <begin position="65"/>
        <end position="70"/>
    </location>
    <ligand>
        <name>mRNA</name>
        <dbReference type="ChEBI" id="CHEBI:33699"/>
    </ligand>
    <ligandPart>
        <name>N(7)-methylguanosine 5'-triphosphate group</name>
        <dbReference type="ChEBI" id="CHEBI:74429"/>
        <note>m7GTP residue in mRNA cap</note>
    </ligandPart>
</feature>
<feature type="binding site" evidence="2">
    <location>
        <position position="97"/>
    </location>
    <ligand>
        <name>mRNA</name>
        <dbReference type="ChEBI" id="CHEBI:33699"/>
    </ligand>
    <ligandPart>
        <name>N(7)-methylguanosine 5'-triphosphate group</name>
        <dbReference type="ChEBI" id="CHEBI:74429"/>
        <note>m7GTP residue in mRNA cap</note>
    </ligandPart>
</feature>
<feature type="binding site" evidence="2">
    <location>
        <begin position="115"/>
        <end position="116"/>
    </location>
    <ligand>
        <name>mRNA</name>
        <dbReference type="ChEBI" id="CHEBI:33699"/>
    </ligand>
    <ligandPart>
        <name>N(7)-methylguanosine 5'-triphosphate group</name>
        <dbReference type="ChEBI" id="CHEBI:74429"/>
        <note>m7GTP residue in mRNA cap</note>
    </ligandPart>
</feature>
<feature type="binding site" evidence="2">
    <location>
        <begin position="165"/>
        <end position="170"/>
    </location>
    <ligand>
        <name>mRNA</name>
        <dbReference type="ChEBI" id="CHEBI:33699"/>
    </ligand>
    <ligandPart>
        <name>N(7)-methylguanosine 5'-triphosphate group</name>
        <dbReference type="ChEBI" id="CHEBI:74429"/>
        <note>m7GTP residue in mRNA cap</note>
    </ligandPart>
</feature>
<feature type="binding site" evidence="3">
    <location>
        <begin position="210"/>
        <end position="214"/>
    </location>
    <ligand>
        <name>mRNA</name>
        <dbReference type="ChEBI" id="CHEBI:33699"/>
    </ligand>
    <ligandPart>
        <name>N(7)-methylguanosine 5'-triphosphate group</name>
        <dbReference type="ChEBI" id="CHEBI:74429"/>
        <note>m7GTP residue in mRNA cap</note>
    </ligandPart>
</feature>
<feature type="disulfide bond" evidence="2">
    <location>
        <begin position="120"/>
        <end position="158"/>
    </location>
</feature>
<feature type="sequence variant" description="In strain: Petite Havana, allele 2." evidence="6">
    <original>R</original>
    <variation>G</variation>
    <location>
        <position position="214"/>
    </location>
</feature>
<accession>Q66UV4</accession>
<accession>D9IP72</accession>
<accession>D9IP73</accession>
<accession>U6BL42</accession>
<sequence length="222" mass="25205">MVDEVEKPVSLEESKTNTREVEEEGEIVGESDDTMSSLGNPSMAMKHALEHSWTFWFDNPSGKSKQAAWGSSIRPIYTFSTVEDFWSVYNNIHHPSKLAVGADFHCFKNKIEPKWEDPVCANGGKWTMSFSRGKSDTCWLYTLLAMIGEQFDCGDEICGAVINVRVRQEKIALWTRNAANETAQVSIGKQWKEFLDYNDSVGFIFHDDAKKLDRAAKNRYSV</sequence>
<comment type="function">
    <text evidence="2 6 7">Component of the protein complex eIF4F, which is involved in the recognition of the mRNA cap, ATP-dependent unwinding of 5'-terminal secondary structure and recruitment of mRNA to the ribosome (By similarity). Recognizes and binds the 7-methylguanosine-containing mRNA cap during an early step in the initiation of protein synthesis and facilitates ribosome binding by inducing the unwinding of the mRNAs secondary structures (By similarity). Key component of recessive resistance to potyviruses (Ref.3, Ref.5).</text>
</comment>
<comment type="function">
    <text evidence="6 7">(Microbial infection) Susceptibility host factor required for viral infection (e.g. potato virus Y (PVY) and pepper mottle virus (PepMoV)) by recruiting viral RNAs to the host ribosomal complex via an interaction with viral genome-linked protein (VPg).</text>
</comment>
<comment type="subunit">
    <text evidence="2">EIF4F is a multi-subunit complex, the composition of which varies with external and internal environmental conditions (By similarity). It is composed of at least EIF4A, EIF4E and EIF4G (By similarity). EIF4E is also known to interact with other partners (By similarity). In higher plants two isoforms of EIF4F have been identified, named isoform EIF4F and isoform EIF(iso)4F (By similarity). Isoform EIF4F has subunits p220 and p26, whereas isoform EIF(iso)4F has subunits p82 and p28 (By similarity).</text>
</comment>
<comment type="subunit">
    <text evidence="13 14">(Microbial infection) Interacts with potyvirus viral genome-linked protein (VPg); this interaction is possible in susceptible hosts but impaired in resistant plants.</text>
</comment>
<comment type="subcellular location">
    <subcellularLocation>
        <location evidence="1">Nucleus</location>
    </subcellularLocation>
    <subcellularLocation>
        <location evidence="1">Cytoplasm</location>
    </subcellularLocation>
</comment>
<comment type="tissue specificity">
    <text evidence="5">Strongly expressed in susceptible plants but not in resistant ones.</text>
</comment>
<comment type="PTM">
    <text evidence="2">According to the redox status, the Cys-120-Cys-158 disulfide bridge may have a role in regulating protein function by affecting its ability to bind capped mRNA.</text>
</comment>
<comment type="miscellaneous">
    <text evidence="13">Displayed sequence is allele 1.</text>
</comment>
<comment type="similarity">
    <text evidence="12">Belongs to the eukaryotic initiation factor 4E family.</text>
</comment>
<proteinExistence type="evidence at protein level"/>